<organism>
    <name type="scientific">Strongylocentrotus purpuratus</name>
    <name type="common">Purple sea urchin</name>
    <dbReference type="NCBI Taxonomy" id="7668"/>
    <lineage>
        <taxon>Eukaryota</taxon>
        <taxon>Metazoa</taxon>
        <taxon>Echinodermata</taxon>
        <taxon>Eleutherozoa</taxon>
        <taxon>Echinozoa</taxon>
        <taxon>Echinoidea</taxon>
        <taxon>Euechinoidea</taxon>
        <taxon>Echinacea</taxon>
        <taxon>Camarodonta</taxon>
        <taxon>Echinidea</taxon>
        <taxon>Strongylocentrotidae</taxon>
        <taxon>Strongylocentrotus</taxon>
    </lineage>
</organism>
<protein>
    <recommendedName>
        <fullName>Protein dead ringer homolog</fullName>
    </recommendedName>
    <alternativeName>
        <fullName>Deadringer-like protein</fullName>
    </alternativeName>
    <alternativeName>
        <fullName>Spdeadringer</fullName>
        <shortName>Spdri</shortName>
    </alternativeName>
</protein>
<dbReference type="EMBL" id="AY130972">
    <property type="protein sequence ID" value="AAM81746.1"/>
    <property type="molecule type" value="mRNA"/>
</dbReference>
<dbReference type="RefSeq" id="NP_999799.1">
    <property type="nucleotide sequence ID" value="NM_214634.2"/>
</dbReference>
<dbReference type="SMR" id="Q8MQH7"/>
<dbReference type="FunCoup" id="Q8MQH7">
    <property type="interactions" value="893"/>
</dbReference>
<dbReference type="STRING" id="7668.Q8MQH7"/>
<dbReference type="GeneID" id="373505"/>
<dbReference type="CTD" id="373505"/>
<dbReference type="eggNOG" id="KOG2744">
    <property type="taxonomic scope" value="Eukaryota"/>
</dbReference>
<dbReference type="HOGENOM" id="CLU_026952_0_2_1"/>
<dbReference type="InParanoid" id="Q8MQH7"/>
<dbReference type="OrthoDB" id="10044343at2759"/>
<dbReference type="PhylomeDB" id="Q8MQH7"/>
<dbReference type="Proteomes" id="UP000007110">
    <property type="component" value="Unassembled WGS sequence"/>
</dbReference>
<dbReference type="GO" id="GO:0005634">
    <property type="term" value="C:nucleus"/>
    <property type="evidence" value="ECO:0000318"/>
    <property type="project" value="GO_Central"/>
</dbReference>
<dbReference type="GO" id="GO:0003677">
    <property type="term" value="F:DNA binding"/>
    <property type="evidence" value="ECO:0000318"/>
    <property type="project" value="GO_Central"/>
</dbReference>
<dbReference type="GO" id="GO:0006357">
    <property type="term" value="P:regulation of transcription by RNA polymerase II"/>
    <property type="evidence" value="ECO:0000318"/>
    <property type="project" value="GO_Central"/>
</dbReference>
<dbReference type="CDD" id="cd16881">
    <property type="entry name" value="ARID_Dri-like"/>
    <property type="match status" value="1"/>
</dbReference>
<dbReference type="FunFam" id="1.10.150.60:FF:000007">
    <property type="entry name" value="AT-rich interactive domain-containing protein 3C"/>
    <property type="match status" value="1"/>
</dbReference>
<dbReference type="Gene3D" id="1.10.150.60">
    <property type="entry name" value="ARID DNA-binding domain"/>
    <property type="match status" value="1"/>
</dbReference>
<dbReference type="InterPro" id="IPR045147">
    <property type="entry name" value="ARI3A/B/C"/>
</dbReference>
<dbReference type="InterPro" id="IPR001606">
    <property type="entry name" value="ARID_dom"/>
</dbReference>
<dbReference type="InterPro" id="IPR036431">
    <property type="entry name" value="ARID_dom_sf"/>
</dbReference>
<dbReference type="InterPro" id="IPR023334">
    <property type="entry name" value="REKLES_domain"/>
</dbReference>
<dbReference type="PANTHER" id="PTHR15348">
    <property type="entry name" value="AT-RICH INTERACTIVE DOMAIN-CONTAINING PROTEIN ARID DOMAIN- CONTAINING PROTEIN DEAD RINGER PROTEIN B-CELL REGULATOR OF IGH TRANSCRIPTION BRIGHT"/>
    <property type="match status" value="1"/>
</dbReference>
<dbReference type="PANTHER" id="PTHR15348:SF0">
    <property type="entry name" value="PROTEIN DEAD RINGER"/>
    <property type="match status" value="1"/>
</dbReference>
<dbReference type="Pfam" id="PF01388">
    <property type="entry name" value="ARID"/>
    <property type="match status" value="1"/>
</dbReference>
<dbReference type="SMART" id="SM01014">
    <property type="entry name" value="ARID"/>
    <property type="match status" value="1"/>
</dbReference>
<dbReference type="SMART" id="SM00501">
    <property type="entry name" value="BRIGHT"/>
    <property type="match status" value="1"/>
</dbReference>
<dbReference type="SUPFAM" id="SSF46774">
    <property type="entry name" value="ARID-like"/>
    <property type="match status" value="1"/>
</dbReference>
<dbReference type="PROSITE" id="PS51011">
    <property type="entry name" value="ARID"/>
    <property type="match status" value="1"/>
</dbReference>
<dbReference type="PROSITE" id="PS51486">
    <property type="entry name" value="REKLES"/>
    <property type="match status" value="1"/>
</dbReference>
<proteinExistence type="evidence at transcript level"/>
<accession>Q8MQH7</accession>
<comment type="function">
    <text evidence="4">Transcription factor involved in skeletogenesis and oral ectoderm patterning.</text>
</comment>
<comment type="subcellular location">
    <subcellularLocation>
        <location evidence="1">Nucleus</location>
    </subcellularLocation>
</comment>
<comment type="developmental stage">
    <text evidence="4">Expressed in the precursors of the skeletogenic or primary mesenchyme cells of the early to mid blastula, and thereafter in the presumptive and then definitive oral ectoderm. In the post-gastrular embryo, expressed in apical plate and ciliary band.</text>
</comment>
<feature type="chain" id="PRO_0000295165" description="Protein dead ringer homolog">
    <location>
        <begin position="1"/>
        <end position="490"/>
    </location>
</feature>
<feature type="domain" description="ARID" evidence="1">
    <location>
        <begin position="202"/>
        <end position="294"/>
    </location>
</feature>
<feature type="domain" description="REKLES" evidence="2">
    <location>
        <begin position="389"/>
        <end position="479"/>
    </location>
</feature>
<feature type="region of interest" description="Disordered" evidence="3">
    <location>
        <begin position="1"/>
        <end position="77"/>
    </location>
</feature>
<feature type="region of interest" description="Disordered" evidence="3">
    <location>
        <begin position="106"/>
        <end position="135"/>
    </location>
</feature>
<feature type="region of interest" description="Disordered" evidence="3">
    <location>
        <begin position="298"/>
        <end position="369"/>
    </location>
</feature>
<feature type="compositionally biased region" description="Basic and acidic residues" evidence="3">
    <location>
        <begin position="1"/>
        <end position="33"/>
    </location>
</feature>
<feature type="compositionally biased region" description="Acidic residues" evidence="3">
    <location>
        <begin position="34"/>
        <end position="50"/>
    </location>
</feature>
<feature type="compositionally biased region" description="Basic and acidic residues" evidence="3">
    <location>
        <begin position="51"/>
        <end position="76"/>
    </location>
</feature>
<feature type="compositionally biased region" description="Polar residues" evidence="3">
    <location>
        <begin position="106"/>
        <end position="117"/>
    </location>
</feature>
<feature type="compositionally biased region" description="Basic residues" evidence="3">
    <location>
        <begin position="316"/>
        <end position="325"/>
    </location>
</feature>
<name>DRI_STRPU</name>
<gene>
    <name type="primary">dri</name>
</gene>
<reference key="1">
    <citation type="journal article" date="2003" name="Dev. Biol.">
        <title>Spdeadringer, a sea urchin embryo gene required separately in skeletogenic and oral ectoderm gene regulatory networks.</title>
        <authorList>
            <person name="Amore G."/>
            <person name="Yavrouian R.G."/>
            <person name="Peterson K.J."/>
            <person name="Ransick A."/>
            <person name="McClay D.R."/>
            <person name="Davidson E.H."/>
        </authorList>
    </citation>
    <scope>NUCLEOTIDE SEQUENCE [MRNA]</scope>
    <scope>FUNCTION</scope>
    <scope>DEVELOPMENTAL STAGE</scope>
</reference>
<evidence type="ECO:0000255" key="1">
    <source>
        <dbReference type="PROSITE-ProRule" id="PRU00355"/>
    </source>
</evidence>
<evidence type="ECO:0000255" key="2">
    <source>
        <dbReference type="PROSITE-ProRule" id="PRU00819"/>
    </source>
</evidence>
<evidence type="ECO:0000256" key="3">
    <source>
        <dbReference type="SAM" id="MobiDB-lite"/>
    </source>
</evidence>
<evidence type="ECO:0000269" key="4">
    <source>
    </source>
</evidence>
<keyword id="KW-0217">Developmental protein</keyword>
<keyword id="KW-0238">DNA-binding</keyword>
<keyword id="KW-0539">Nucleus</keyword>
<keyword id="KW-1185">Reference proteome</keyword>
<keyword id="KW-0804">Transcription</keyword>
<keyword id="KW-0805">Transcription regulation</keyword>
<sequence length="490" mass="56206">MVEDQRRQLMEEEDEERRLILEEQRRRMMRADRDEEEEEEEEEEEEEREEDDGRRSEDEMREDEPPGRRETSHAHIDLNMMRANAHLKEMMDKNRRFVSTRLEEPITQSPPLTNGSNHDNDHDPYLSHRAAHGGSPDLPHSYMKAAHPLIKKEDGIAKMEMDIGLKDEMKMGAGLEDRDGDKPQTEWSFEEQFKQLYELSTDSKRKEFLDDLFSYMQKRGTPVNRIPIMAKQVLDLYELYNLVVAKGGLVEVINKKQWREITKGLNLPASITSAAFTLRTQYMKYLYPYECEKKGLSSPSELQSAIDGNRREGRRPSYHSPHMHPRGPSLAYHHGLDLHTPSGSPPPTMIPHPSRIPTLPPRLSPSTSPIEDDHPVPLGFPRQGTLSHAAMLAELAERGSIPPPSKRSLLAEEHHHRLLQLQQQHLVMPTAHLKVSSARAHPENGMPLFEMRGDNSLVMSIELNSVLYQGVLYPRGGTRSSLDRDTSTPV</sequence>